<name>PNC1_YEAST</name>
<protein>
    <recommendedName>
        <fullName>Nicotinamidase</fullName>
        <ecNumber evidence="7">3.5.1.19</ecNumber>
    </recommendedName>
    <alternativeName>
        <fullName>Nicotinamide deamidase</fullName>
        <shortName>NAMase</shortName>
    </alternativeName>
</protein>
<feature type="chain" id="PRO_0000206558" description="Nicotinamidase">
    <location>
        <begin position="1"/>
        <end position="216"/>
    </location>
</feature>
<feature type="active site" evidence="1">
    <location>
        <position position="8"/>
    </location>
</feature>
<feature type="active site" evidence="1">
    <location>
        <position position="122"/>
    </location>
</feature>
<feature type="active site" description="Nucleophile" evidence="1">
    <location>
        <position position="167"/>
    </location>
</feature>
<feature type="binding site" evidence="7 11">
    <location>
        <position position="51"/>
    </location>
    <ligand>
        <name>Zn(2+)</name>
        <dbReference type="ChEBI" id="CHEBI:29105"/>
    </ligand>
</feature>
<feature type="binding site" evidence="7 11">
    <location>
        <position position="53"/>
    </location>
    <ligand>
        <name>Zn(2+)</name>
        <dbReference type="ChEBI" id="CHEBI:29105"/>
    </ligand>
</feature>
<feature type="binding site" evidence="7 11">
    <location>
        <position position="94"/>
    </location>
    <ligand>
        <name>Zn(2+)</name>
        <dbReference type="ChEBI" id="CHEBI:29105"/>
    </ligand>
</feature>
<feature type="strand" evidence="12">
    <location>
        <begin position="2"/>
        <end position="7"/>
    </location>
</feature>
<feature type="helix" evidence="12">
    <location>
        <begin position="11"/>
        <end position="14"/>
    </location>
</feature>
<feature type="helix" evidence="12">
    <location>
        <begin position="25"/>
        <end position="28"/>
    </location>
</feature>
<feature type="helix" evidence="12">
    <location>
        <begin position="29"/>
        <end position="37"/>
    </location>
</feature>
<feature type="helix" evidence="12">
    <location>
        <begin position="39"/>
        <end position="41"/>
    </location>
</feature>
<feature type="strand" evidence="12">
    <location>
        <begin position="43"/>
        <end position="51"/>
    </location>
</feature>
<feature type="helix" evidence="12">
    <location>
        <begin position="61"/>
        <end position="63"/>
    </location>
</feature>
<feature type="strand" evidence="12">
    <location>
        <begin position="72"/>
        <end position="76"/>
    </location>
</feature>
<feature type="strand" evidence="12">
    <location>
        <begin position="85"/>
        <end position="89"/>
    </location>
</feature>
<feature type="helix" evidence="12">
    <location>
        <begin position="100"/>
        <end position="102"/>
    </location>
</feature>
<feature type="helix" evidence="12">
    <location>
        <begin position="106"/>
        <end position="115"/>
    </location>
</feature>
<feature type="strand" evidence="12">
    <location>
        <begin position="118"/>
        <end position="122"/>
    </location>
</feature>
<feature type="strand" evidence="12">
    <location>
        <begin position="132"/>
        <end position="135"/>
    </location>
</feature>
<feature type="helix" evidence="12">
    <location>
        <begin position="145"/>
        <end position="151"/>
    </location>
</feature>
<feature type="strand" evidence="12">
    <location>
        <begin position="156"/>
        <end position="162"/>
    </location>
</feature>
<feature type="helix" evidence="12">
    <location>
        <begin position="164"/>
        <end position="168"/>
    </location>
</feature>
<feature type="helix" evidence="12">
    <location>
        <begin position="169"/>
        <end position="177"/>
    </location>
</feature>
<feature type="strand" evidence="12">
    <location>
        <begin position="181"/>
        <end position="190"/>
    </location>
</feature>
<feature type="helix" evidence="12">
    <location>
        <begin position="196"/>
        <end position="208"/>
    </location>
</feature>
<feature type="strand" evidence="12">
    <location>
        <begin position="212"/>
        <end position="214"/>
    </location>
</feature>
<accession>P53184</accession>
<accession>D6VUA2</accession>
<comment type="function">
    <text evidence="2 3 6">Catalyzes the deamidation of nicotinamide, an early step in the NAD(+) salvage pathway. Positively regulates SIR2-mediated silencing and longevity by preventing the accumulation of intracellular nicotinamide, an inhibitor of SIR2, during times of stress. Also acts on nicotinyl hydroxamate.</text>
</comment>
<comment type="catalytic activity">
    <reaction evidence="7">
        <text>nicotinamide + H2O = nicotinate + NH4(+)</text>
        <dbReference type="Rhea" id="RHEA:14545"/>
        <dbReference type="ChEBI" id="CHEBI:15377"/>
        <dbReference type="ChEBI" id="CHEBI:17154"/>
        <dbReference type="ChEBI" id="CHEBI:28938"/>
        <dbReference type="ChEBI" id="CHEBI:32544"/>
        <dbReference type="EC" id="3.5.1.19"/>
    </reaction>
</comment>
<comment type="activity regulation">
    <text evidence="8 9">Inhibited by N-ethylmaleimide, HgCl(2) and PCMB. Competitively inhibited by NAD, NMN and 3-acetylpyridine.</text>
</comment>
<comment type="biophysicochemical properties">
    <kinetics>
        <KM evidence="7 8 9">5.8 uM for nicotinamide</KM>
        <KM evidence="7 8 9">32 uM for nicotinyl hydroxamate</KM>
        <KM evidence="7 8 9">0.2 mM for pyrazinamide</KM>
        <Vmax evidence="7 8 9">50.2 umol/min/mg enzyme for nicotinamide</Vmax>
        <Vmax evidence="7 8 9">59.4 umol/min/mg enzyme for pyrazinamide</Vmax>
    </kinetics>
    <phDependence>
        <text evidence="7 8 9">Optimum pH is 6.5-7.5.</text>
    </phDependence>
    <temperatureDependence>
        <text evidence="7 8 9">Heating at 60 degrees Celsius inactivates the enzyme. Heating at 60 degrees Celsius in the presence of substrate prevents inactivation.</text>
    </temperatureDependence>
</comment>
<comment type="pathway">
    <text>Cofactor biosynthesis; nicotinate biosynthesis; nicotinate from nicotinamide: step 1/1.</text>
</comment>
<comment type="subcellular location">
    <subcellularLocation>
        <location evidence="3">Cytoplasm</location>
    </subcellularLocation>
    <subcellularLocation>
        <location evidence="3">Nucleus</location>
    </subcellularLocation>
    <subcellularLocation>
        <location evidence="3 4">Peroxisome</location>
    </subcellularLocation>
    <text evidence="3">Concentrates in peroxisomes (PubMed:12736687).</text>
</comment>
<comment type="induction">
    <text evidence="2 3">Induced during the stationary phase of growth, by calorie restriction, by various hyperosmotic shocks or by low-intensity stress (at protein level).</text>
</comment>
<comment type="miscellaneous">
    <text>Has a cis-peptide bond at 162-Val-Ala-163.</text>
</comment>
<comment type="miscellaneous">
    <text evidence="5">Present with 7720 molecules/cell in log phase SD medium.</text>
</comment>
<comment type="similarity">
    <text evidence="10">Belongs to the isochorismatase family.</text>
</comment>
<evidence type="ECO:0000255" key="1"/>
<evidence type="ECO:0000269" key="2">
    <source>
    </source>
</evidence>
<evidence type="ECO:0000269" key="3">
    <source>
    </source>
</evidence>
<evidence type="ECO:0000269" key="4">
    <source>
    </source>
</evidence>
<evidence type="ECO:0000269" key="5">
    <source>
    </source>
</evidence>
<evidence type="ECO:0000269" key="6">
    <source>
    </source>
</evidence>
<evidence type="ECO:0000269" key="7">
    <source>
    </source>
</evidence>
<evidence type="ECO:0000269" key="8">
    <source>
    </source>
</evidence>
<evidence type="ECO:0000269" key="9">
    <source>
    </source>
</evidence>
<evidence type="ECO:0000305" key="10"/>
<evidence type="ECO:0007744" key="11">
    <source>
        <dbReference type="PDB" id="2H0R"/>
    </source>
</evidence>
<evidence type="ECO:0007829" key="12">
    <source>
        <dbReference type="PDB" id="3V8E"/>
    </source>
</evidence>
<sequence length="216" mass="24993">MKTLIVVDMQNDFISPLGSLTVPKGEELINPISDLMQDADRDWHRIVVTRDWHPSRHISFAKNHKDKEPYSTYTYHSPRPGDDSTQEGILWPVHCVKNTWGSQLVDQIMDQVVTKHIKIVDKGFLTDREYYSAFHDIWNFHKTDMNKYLEKHHTDEVYIVGVALEYCVKATAISAAELGYKTTVLLDYTRPISDDPEVINKVKEELKAHNINVVDK</sequence>
<organism>
    <name type="scientific">Saccharomyces cerevisiae (strain ATCC 204508 / S288c)</name>
    <name type="common">Baker's yeast</name>
    <dbReference type="NCBI Taxonomy" id="559292"/>
    <lineage>
        <taxon>Eukaryota</taxon>
        <taxon>Fungi</taxon>
        <taxon>Dikarya</taxon>
        <taxon>Ascomycota</taxon>
        <taxon>Saccharomycotina</taxon>
        <taxon>Saccharomycetes</taxon>
        <taxon>Saccharomycetales</taxon>
        <taxon>Saccharomycetaceae</taxon>
        <taxon>Saccharomyces</taxon>
    </lineage>
</organism>
<reference key="1">
    <citation type="journal article" date="1997" name="Nature">
        <title>The nucleotide sequence of Saccharomyces cerevisiae chromosome VII.</title>
        <authorList>
            <person name="Tettelin H."/>
            <person name="Agostoni-Carbone M.L."/>
            <person name="Albermann K."/>
            <person name="Albers M."/>
            <person name="Arroyo J."/>
            <person name="Backes U."/>
            <person name="Barreiros T."/>
            <person name="Bertani I."/>
            <person name="Bjourson A.J."/>
            <person name="Brueckner M."/>
            <person name="Bruschi C.V."/>
            <person name="Carignani G."/>
            <person name="Castagnoli L."/>
            <person name="Cerdan E."/>
            <person name="Clemente M.L."/>
            <person name="Coblenz A."/>
            <person name="Coglievina M."/>
            <person name="Coissac E."/>
            <person name="Defoor E."/>
            <person name="Del Bino S."/>
            <person name="Delius H."/>
            <person name="Delneri D."/>
            <person name="de Wergifosse P."/>
            <person name="Dujon B."/>
            <person name="Durand P."/>
            <person name="Entian K.-D."/>
            <person name="Eraso P."/>
            <person name="Escribano V."/>
            <person name="Fabiani L."/>
            <person name="Fartmann B."/>
            <person name="Feroli F."/>
            <person name="Feuermann M."/>
            <person name="Frontali L."/>
            <person name="Garcia-Gonzalez M."/>
            <person name="Garcia-Saez M.I."/>
            <person name="Goffeau A."/>
            <person name="Guerreiro P."/>
            <person name="Hani J."/>
            <person name="Hansen M."/>
            <person name="Hebling U."/>
            <person name="Hernandez K."/>
            <person name="Heumann K."/>
            <person name="Hilger F."/>
            <person name="Hofmann B."/>
            <person name="Indge K.J."/>
            <person name="James C.M."/>
            <person name="Klima R."/>
            <person name="Koetter P."/>
            <person name="Kramer B."/>
            <person name="Kramer W."/>
            <person name="Lauquin G."/>
            <person name="Leuther H."/>
            <person name="Louis E.J."/>
            <person name="Maillier E."/>
            <person name="Marconi A."/>
            <person name="Martegani E."/>
            <person name="Mazon M.J."/>
            <person name="Mazzoni C."/>
            <person name="McReynolds A.D.K."/>
            <person name="Melchioretto P."/>
            <person name="Mewes H.-W."/>
            <person name="Minenkova O."/>
            <person name="Mueller-Auer S."/>
            <person name="Nawrocki A."/>
            <person name="Netter P."/>
            <person name="Neu R."/>
            <person name="Nombela C."/>
            <person name="Oliver S.G."/>
            <person name="Panzeri L."/>
            <person name="Paoluzi S."/>
            <person name="Plevani P."/>
            <person name="Portetelle D."/>
            <person name="Portillo F."/>
            <person name="Potier S."/>
            <person name="Purnelle B."/>
            <person name="Rieger M."/>
            <person name="Riles L."/>
            <person name="Rinaldi T."/>
            <person name="Robben J."/>
            <person name="Rodrigues-Pousada C."/>
            <person name="Rodriguez-Belmonte E."/>
            <person name="Rodriguez-Torres A.M."/>
            <person name="Rose M."/>
            <person name="Ruzzi M."/>
            <person name="Saliola M."/>
            <person name="Sanchez-Perez M."/>
            <person name="Schaefer B."/>
            <person name="Schaefer M."/>
            <person name="Scharfe M."/>
            <person name="Schmidheini T."/>
            <person name="Schreer A."/>
            <person name="Skala J."/>
            <person name="Souciet J.-L."/>
            <person name="Steensma H.Y."/>
            <person name="Talla E."/>
            <person name="Thierry A."/>
            <person name="Vandenbol M."/>
            <person name="van der Aart Q.J.M."/>
            <person name="Van Dyck L."/>
            <person name="Vanoni M."/>
            <person name="Verhasselt P."/>
            <person name="Voet M."/>
            <person name="Volckaert G."/>
            <person name="Wambutt R."/>
            <person name="Watson M.D."/>
            <person name="Weber N."/>
            <person name="Wedler E."/>
            <person name="Wedler H."/>
            <person name="Wipfli P."/>
            <person name="Wolf K."/>
            <person name="Wright L.F."/>
            <person name="Zaccaria P."/>
            <person name="Zimmermann M."/>
            <person name="Zollner A."/>
            <person name="Kleine K."/>
        </authorList>
    </citation>
    <scope>NUCLEOTIDE SEQUENCE [LARGE SCALE GENOMIC DNA]</scope>
    <source>
        <strain>ATCC 204508 / S288c</strain>
    </source>
</reference>
<reference key="2">
    <citation type="journal article" date="2014" name="G3 (Bethesda)">
        <title>The reference genome sequence of Saccharomyces cerevisiae: Then and now.</title>
        <authorList>
            <person name="Engel S.R."/>
            <person name="Dietrich F.S."/>
            <person name="Fisk D.G."/>
            <person name="Binkley G."/>
            <person name="Balakrishnan R."/>
            <person name="Costanzo M.C."/>
            <person name="Dwight S.S."/>
            <person name="Hitz B.C."/>
            <person name="Karra K."/>
            <person name="Nash R.S."/>
            <person name="Weng S."/>
            <person name="Wong E.D."/>
            <person name="Lloyd P."/>
            <person name="Skrzypek M.S."/>
            <person name="Miyasato S.R."/>
            <person name="Simison M."/>
            <person name="Cherry J.M."/>
        </authorList>
    </citation>
    <scope>GENOME REANNOTATION</scope>
    <source>
        <strain>ATCC 204508 / S288c</strain>
    </source>
</reference>
<reference key="3">
    <citation type="journal article" date="2007" name="Genome Res.">
        <title>Approaching a complete repository of sequence-verified protein-encoding clones for Saccharomyces cerevisiae.</title>
        <authorList>
            <person name="Hu Y."/>
            <person name="Rolfs A."/>
            <person name="Bhullar B."/>
            <person name="Murthy T.V.S."/>
            <person name="Zhu C."/>
            <person name="Berger M.F."/>
            <person name="Camargo A.A."/>
            <person name="Kelley F."/>
            <person name="McCarron S."/>
            <person name="Jepson D."/>
            <person name="Richardson A."/>
            <person name="Raphael J."/>
            <person name="Moreira D."/>
            <person name="Taycher E."/>
            <person name="Zuo D."/>
            <person name="Mohr S."/>
            <person name="Kane M.F."/>
            <person name="Williamson J."/>
            <person name="Simpson A.J.G."/>
            <person name="Bulyk M.L."/>
            <person name="Harlow E."/>
            <person name="Marsischky G."/>
            <person name="Kolodner R.D."/>
            <person name="LaBaer J."/>
        </authorList>
    </citation>
    <scope>NUCLEOTIDE SEQUENCE [GENOMIC DNA]</scope>
    <source>
        <strain>ATCC 204508 / S288c</strain>
    </source>
</reference>
<reference key="4">
    <citation type="journal article" date="2002" name="Yeast">
        <title>Identification and functional analysis of the Saccharomyces cerevisiae nicotinamidase gene, PNC1.</title>
        <authorList>
            <person name="Ghislain M."/>
            <person name="Talla E."/>
            <person name="Francois J.M."/>
        </authorList>
    </citation>
    <scope>PROTEIN SEQUENCE OF 1-11</scope>
    <scope>FUNCTION</scope>
    <scope>INDUCTION</scope>
</reference>
<reference key="5">
    <citation type="journal article" date="1967" name="Arch. Biochem. Biophys.">
        <title>Hydrolysis of nicotinyl hydroxamate by a yeast nicotinamidase.</title>
        <authorList>
            <person name="Bernheim M.L.C."/>
        </authorList>
    </citation>
    <scope>BIOPHYSICOCHEMICAL PROPERTIES</scope>
    <scope>ACTIVITY REGULATION</scope>
</reference>
<reference key="6">
    <citation type="journal article" date="1971" name="J. Biol. Chem.">
        <title>Inhibition of nicotinamidase by nicotinamide adenine dinucleotide.</title>
        <authorList>
            <person name="Calbreath D.F."/>
            <person name="Joshi J.G."/>
        </authorList>
    </citation>
    <scope>BIOPHYSICOCHEMICAL PROPERTIES</scope>
    <scope>ACTIVITY REGULATION</scope>
</reference>
<reference key="7">
    <citation type="journal article" date="2003" name="Nature">
        <title>Nicotinamide and PNC1 govern lifespan extension by calorie restriction in Saccharomyces cerevisiae.</title>
        <authorList>
            <person name="Anderson R.M."/>
            <person name="Bitterman K.J."/>
            <person name="Wood J.G."/>
            <person name="Medvedik O."/>
            <person name="Sinclair D.A."/>
        </authorList>
    </citation>
    <scope>FUNCTION</scope>
    <scope>SUBCELLULAR LOCATION</scope>
    <scope>INDUCTION</scope>
</reference>
<reference key="8">
    <citation type="journal article" date="2003" name="Nature">
        <title>Global analysis of protein localization in budding yeast.</title>
        <authorList>
            <person name="Huh W.-K."/>
            <person name="Falvo J.V."/>
            <person name="Gerke L.C."/>
            <person name="Carroll A.S."/>
            <person name="Howson R.W."/>
            <person name="Weissman J.S."/>
            <person name="O'Shea E.K."/>
        </authorList>
    </citation>
    <scope>SUBCELLULAR LOCATION [LARGE SCALE ANALYSIS]</scope>
</reference>
<reference key="9">
    <citation type="journal article" date="2003" name="Nature">
        <title>Global analysis of protein expression in yeast.</title>
        <authorList>
            <person name="Ghaemmaghami S."/>
            <person name="Huh W.-K."/>
            <person name="Bower K."/>
            <person name="Howson R.W."/>
            <person name="Belle A."/>
            <person name="Dephoure N."/>
            <person name="O'Shea E.K."/>
            <person name="Weissman J.S."/>
        </authorList>
    </citation>
    <scope>LEVEL OF PROTEIN EXPRESSION [LARGE SCALE ANALYSIS]</scope>
</reference>
<reference key="10">
    <citation type="journal article" date="2004" name="Mol. Cell. Biol.">
        <title>Nicotinamide clearance by Pnc1 directly regulates Sir2-mediated silencing and longevity.</title>
        <authorList>
            <person name="Gallo C.M."/>
            <person name="Smith D.L. Jr."/>
            <person name="Smith J.S."/>
        </authorList>
    </citation>
    <scope>FUNCTION</scope>
</reference>
<reference key="11">
    <citation type="journal article" date="2008" name="Mol. Cell. Proteomics">
        <title>A multidimensional chromatography technology for in-depth phosphoproteome analysis.</title>
        <authorList>
            <person name="Albuquerque C.P."/>
            <person name="Smolka M.B."/>
            <person name="Payne S.H."/>
            <person name="Bafna V."/>
            <person name="Eng J."/>
            <person name="Zhou H."/>
        </authorList>
    </citation>
    <scope>IDENTIFICATION BY MASS SPECTROMETRY [LARGE SCALE ANALYSIS]</scope>
</reference>
<reference key="12">
    <citation type="journal article" date="2007" name="Arch. Biochem. Biophys.">
        <title>Crystal structure of the yeast nicotinamidase Pnc1p.</title>
        <authorList>
            <person name="Hu G."/>
            <person name="Taylor A.B."/>
            <person name="McAlister-Henn L."/>
            <person name="Hart P.J."/>
        </authorList>
    </citation>
    <scope>X-RAY CRYSTALLOGRAPHY (2.9 ANGSTROMS) IN COMPLEX WITH ZINC IONS</scope>
    <scope>CATALYTIC ACTIVITY</scope>
    <scope>BIOPHYSICOCHEMICAL PROPERTIES</scope>
</reference>
<keyword id="KW-0002">3D-structure</keyword>
<keyword id="KW-0963">Cytoplasm</keyword>
<keyword id="KW-0903">Direct protein sequencing</keyword>
<keyword id="KW-0378">Hydrolase</keyword>
<keyword id="KW-0479">Metal-binding</keyword>
<keyword id="KW-0539">Nucleus</keyword>
<keyword id="KW-0576">Peroxisome</keyword>
<keyword id="KW-0662">Pyridine nucleotide biosynthesis</keyword>
<keyword id="KW-1185">Reference proteome</keyword>
<keyword id="KW-0862">Zinc</keyword>
<dbReference type="EC" id="3.5.1.19" evidence="7"/>
<dbReference type="EMBL" id="Z72559">
    <property type="protein sequence ID" value="CAA96739.1"/>
    <property type="molecule type" value="Genomic_DNA"/>
</dbReference>
<dbReference type="EMBL" id="AY558481">
    <property type="protein sequence ID" value="AAS56807.1"/>
    <property type="molecule type" value="Genomic_DNA"/>
</dbReference>
<dbReference type="EMBL" id="BK006941">
    <property type="protein sequence ID" value="DAA08063.1"/>
    <property type="molecule type" value="Genomic_DNA"/>
</dbReference>
<dbReference type="PIR" id="S64039">
    <property type="entry name" value="S64039"/>
</dbReference>
<dbReference type="RefSeq" id="NP_011478.3">
    <property type="nucleotide sequence ID" value="NM_001180902.3"/>
</dbReference>
<dbReference type="PDB" id="2H0R">
    <property type="method" value="X-ray"/>
    <property type="resolution" value="2.90 A"/>
    <property type="chains" value="A/B/C/D/E/F/G=1-216"/>
</dbReference>
<dbReference type="PDB" id="3V8E">
    <property type="method" value="X-ray"/>
    <property type="resolution" value="2.71 A"/>
    <property type="chains" value="A/B/C/D/E/F/G=1-216"/>
</dbReference>
<dbReference type="PDBsum" id="2H0R"/>
<dbReference type="PDBsum" id="3V8E"/>
<dbReference type="SMR" id="P53184"/>
<dbReference type="BioGRID" id="33210">
    <property type="interactions" value="120"/>
</dbReference>
<dbReference type="DIP" id="DIP-2070N"/>
<dbReference type="FunCoup" id="P53184">
    <property type="interactions" value="558"/>
</dbReference>
<dbReference type="IntAct" id="P53184">
    <property type="interactions" value="28"/>
</dbReference>
<dbReference type="MINT" id="P53184"/>
<dbReference type="STRING" id="4932.YGL037C"/>
<dbReference type="BindingDB" id="P53184"/>
<dbReference type="iPTMnet" id="P53184"/>
<dbReference type="PaxDb" id="4932-YGL037C"/>
<dbReference type="PeptideAtlas" id="P53184"/>
<dbReference type="TopDownProteomics" id="P53184"/>
<dbReference type="EnsemblFungi" id="YGL037C_mRNA">
    <property type="protein sequence ID" value="YGL037C"/>
    <property type="gene ID" value="YGL037C"/>
</dbReference>
<dbReference type="GeneID" id="852846"/>
<dbReference type="KEGG" id="sce:YGL037C"/>
<dbReference type="AGR" id="SGD:S000003005"/>
<dbReference type="SGD" id="S000003005">
    <property type="gene designation" value="PNC1"/>
</dbReference>
<dbReference type="VEuPathDB" id="FungiDB:YGL037C"/>
<dbReference type="eggNOG" id="KOG4003">
    <property type="taxonomic scope" value="Eukaryota"/>
</dbReference>
<dbReference type="HOGENOM" id="CLU_068979_13_0_1"/>
<dbReference type="InParanoid" id="P53184"/>
<dbReference type="OMA" id="DFVDSWP"/>
<dbReference type="OrthoDB" id="3341310at2759"/>
<dbReference type="BioCyc" id="MetaCyc:YGL037C-MONOMER"/>
<dbReference type="BioCyc" id="YEAST:YGL037C-MONOMER"/>
<dbReference type="BRENDA" id="3.5.1.19">
    <property type="organism ID" value="984"/>
</dbReference>
<dbReference type="UniPathway" id="UPA00830">
    <property type="reaction ID" value="UER00790"/>
</dbReference>
<dbReference type="BioGRID-ORCS" id="852846">
    <property type="hits" value="3 hits in 10 CRISPR screens"/>
</dbReference>
<dbReference type="EvolutionaryTrace" id="P53184"/>
<dbReference type="PRO" id="PR:P53184"/>
<dbReference type="Proteomes" id="UP000002311">
    <property type="component" value="Chromosome VII"/>
</dbReference>
<dbReference type="RNAct" id="P53184">
    <property type="molecule type" value="protein"/>
</dbReference>
<dbReference type="GO" id="GO:0000781">
    <property type="term" value="C:chromosome, telomeric region"/>
    <property type="evidence" value="ECO:0007669"/>
    <property type="project" value="GOC"/>
</dbReference>
<dbReference type="GO" id="GO:0005737">
    <property type="term" value="C:cytoplasm"/>
    <property type="evidence" value="ECO:0000314"/>
    <property type="project" value="SGD"/>
</dbReference>
<dbReference type="GO" id="GO:0005634">
    <property type="term" value="C:nucleus"/>
    <property type="evidence" value="ECO:0000314"/>
    <property type="project" value="SGD"/>
</dbReference>
<dbReference type="GO" id="GO:0005777">
    <property type="term" value="C:peroxisome"/>
    <property type="evidence" value="ECO:0000314"/>
    <property type="project" value="SGD"/>
</dbReference>
<dbReference type="GO" id="GO:0046872">
    <property type="term" value="F:metal ion binding"/>
    <property type="evidence" value="ECO:0007669"/>
    <property type="project" value="UniProtKB-KW"/>
</dbReference>
<dbReference type="GO" id="GO:0008936">
    <property type="term" value="F:nicotinamidase activity"/>
    <property type="evidence" value="ECO:0000315"/>
    <property type="project" value="SGD"/>
</dbReference>
<dbReference type="GO" id="GO:1904524">
    <property type="term" value="P:negative regulation of DNA amplification"/>
    <property type="evidence" value="ECO:0000315"/>
    <property type="project" value="SGD"/>
</dbReference>
<dbReference type="GO" id="GO:0019358">
    <property type="term" value="P:nicotinate nucleotide salvage"/>
    <property type="evidence" value="ECO:0000315"/>
    <property type="project" value="SGD"/>
</dbReference>
<dbReference type="GO" id="GO:0000183">
    <property type="term" value="P:rDNA heterochromatin formation"/>
    <property type="evidence" value="ECO:0000315"/>
    <property type="project" value="SGD"/>
</dbReference>
<dbReference type="GO" id="GO:0031509">
    <property type="term" value="P:subtelomeric heterochromatin formation"/>
    <property type="evidence" value="ECO:0000315"/>
    <property type="project" value="SGD"/>
</dbReference>
<dbReference type="CDD" id="cd01011">
    <property type="entry name" value="nicotinamidase"/>
    <property type="match status" value="1"/>
</dbReference>
<dbReference type="FunFam" id="3.40.50.850:FF:000010">
    <property type="entry name" value="Nicotinamidase"/>
    <property type="match status" value="1"/>
</dbReference>
<dbReference type="Gene3D" id="3.40.50.850">
    <property type="entry name" value="Isochorismatase-like"/>
    <property type="match status" value="1"/>
</dbReference>
<dbReference type="InterPro" id="IPR000868">
    <property type="entry name" value="Isochorismatase-like_dom"/>
</dbReference>
<dbReference type="InterPro" id="IPR036380">
    <property type="entry name" value="Isochorismatase-like_sf"/>
</dbReference>
<dbReference type="InterPro" id="IPR052347">
    <property type="entry name" value="Isochorismatase_Nicotinamidase"/>
</dbReference>
<dbReference type="PANTHER" id="PTHR11080:SF2">
    <property type="entry name" value="LD05707P"/>
    <property type="match status" value="1"/>
</dbReference>
<dbReference type="PANTHER" id="PTHR11080">
    <property type="entry name" value="PYRAZINAMIDASE/NICOTINAMIDASE"/>
    <property type="match status" value="1"/>
</dbReference>
<dbReference type="Pfam" id="PF00857">
    <property type="entry name" value="Isochorismatase"/>
    <property type="match status" value="1"/>
</dbReference>
<dbReference type="SUPFAM" id="SSF52499">
    <property type="entry name" value="Isochorismatase-like hydrolases"/>
    <property type="match status" value="1"/>
</dbReference>
<gene>
    <name type="primary">PNC1</name>
    <name type="ordered locus">YGL037C</name>
</gene>
<proteinExistence type="evidence at protein level"/>